<proteinExistence type="inferred from homology"/>
<accession>A5W6H0</accession>
<comment type="function">
    <text evidence="1">Involved in the aerobic and anaerobic degradation of long-chain fatty acids via beta-oxidation cycle. Catalyzes the formation of 3-oxoacyl-CoA from enoyl-CoA via L-3-hydroxyacyl-CoA. It can also use D-3-hydroxyacyl-CoA and cis-3-enoyl-CoA as substrate.</text>
</comment>
<comment type="catalytic activity">
    <reaction evidence="1">
        <text>a (3S)-3-hydroxyacyl-CoA + NAD(+) = a 3-oxoacyl-CoA + NADH + H(+)</text>
        <dbReference type="Rhea" id="RHEA:22432"/>
        <dbReference type="ChEBI" id="CHEBI:15378"/>
        <dbReference type="ChEBI" id="CHEBI:57318"/>
        <dbReference type="ChEBI" id="CHEBI:57540"/>
        <dbReference type="ChEBI" id="CHEBI:57945"/>
        <dbReference type="ChEBI" id="CHEBI:90726"/>
        <dbReference type="EC" id="1.1.1.35"/>
    </reaction>
</comment>
<comment type="catalytic activity">
    <reaction evidence="1">
        <text>a (3S)-3-hydroxyacyl-CoA = a (2E)-enoyl-CoA + H2O</text>
        <dbReference type="Rhea" id="RHEA:16105"/>
        <dbReference type="ChEBI" id="CHEBI:15377"/>
        <dbReference type="ChEBI" id="CHEBI:57318"/>
        <dbReference type="ChEBI" id="CHEBI:58856"/>
        <dbReference type="EC" id="4.2.1.17"/>
    </reaction>
</comment>
<comment type="catalytic activity">
    <reaction evidence="1">
        <text>a 4-saturated-(3S)-3-hydroxyacyl-CoA = a (3E)-enoyl-CoA + H2O</text>
        <dbReference type="Rhea" id="RHEA:20724"/>
        <dbReference type="ChEBI" id="CHEBI:15377"/>
        <dbReference type="ChEBI" id="CHEBI:58521"/>
        <dbReference type="ChEBI" id="CHEBI:137480"/>
        <dbReference type="EC" id="4.2.1.17"/>
    </reaction>
</comment>
<comment type="catalytic activity">
    <reaction evidence="1">
        <text>(3S)-3-hydroxybutanoyl-CoA = (3R)-3-hydroxybutanoyl-CoA</text>
        <dbReference type="Rhea" id="RHEA:21760"/>
        <dbReference type="ChEBI" id="CHEBI:57315"/>
        <dbReference type="ChEBI" id="CHEBI:57316"/>
        <dbReference type="EC" id="5.1.2.3"/>
    </reaction>
</comment>
<comment type="catalytic activity">
    <reaction evidence="1">
        <text>a (3Z)-enoyl-CoA = a 4-saturated (2E)-enoyl-CoA</text>
        <dbReference type="Rhea" id="RHEA:45900"/>
        <dbReference type="ChEBI" id="CHEBI:85097"/>
        <dbReference type="ChEBI" id="CHEBI:85489"/>
        <dbReference type="EC" id="5.3.3.8"/>
    </reaction>
</comment>
<comment type="catalytic activity">
    <reaction evidence="1">
        <text>a (3E)-enoyl-CoA = a 4-saturated (2E)-enoyl-CoA</text>
        <dbReference type="Rhea" id="RHEA:45228"/>
        <dbReference type="ChEBI" id="CHEBI:58521"/>
        <dbReference type="ChEBI" id="CHEBI:85097"/>
        <dbReference type="EC" id="5.3.3.8"/>
    </reaction>
</comment>
<comment type="pathway">
    <text evidence="1">Lipid metabolism; fatty acid beta-oxidation.</text>
</comment>
<comment type="subunit">
    <text evidence="1">Heterotetramer of two alpha chains (FadB) and two beta chains (FadA).</text>
</comment>
<comment type="similarity">
    <text evidence="1">In the N-terminal section; belongs to the enoyl-CoA hydratase/isomerase family.</text>
</comment>
<comment type="similarity">
    <text evidence="1">In the C-terminal section; belongs to the 3-hydroxyacyl-CoA dehydrogenase family.</text>
</comment>
<sequence>MIYEGKAITVKALESGIVELKFDLKGESVNKFNRLTLNELRQAVDAIRADASVKGVIVSSGKDVFIVGADITEFVDNFKLPEAELVAGNLEANRIFNAFEDLEVPTVAAINGIALGGGLEMCLAADYRVMSTSARIGLPEVKLGIYPGFGGTVRLPRLIGSDNAIEWIAAGKENRAEDALKVGAVDAVVAPELLLAGALDLIKRAISGELDYKAKRQPKLEKLKLNAIEQMMAFETAKGFVAGQAGPNYPAPVEAIKSIQKAANFGRDKALEVEAAGFAKLAKTSVAESLIGLFLNDQELKRKAKAHDEIAHDVKQAAVLGAGIMGGGIAYQSAVKGTPILMKDIREEAIQLGLNEASKLLGNRVEKGRLTPAKMAEALNAIRPTLSYGDFANVDIVVEAVVENPKVKQAVLAEVEGQVKDDAILASNTSTISINLLAKALKRPENFVGMHFFNPVHMMPLVEVIRGEKSSDVAVATTVAYAKKMGKNPIVVNDCPGFLVNRVLFPYFGGFAKLVSAGVDFVRIDKVMEKFGWPMGPAYLMDVVGIDTGHHGRDVMAEGFPDRMKDERRSAVDALYESNRLGQKNGKGFYAYETDKRGKPKKVFDATVLDVLKPIVFEQREVTDEDIINWMMVPLCLETVRCLEDGIVETAAEADMGLVYGIGFPPFRGGALRYIDSIGVAEFVALADQYADLGPLYHPTAKLREMAKNGQRFFN</sequence>
<reference key="1">
    <citation type="submission" date="2007-05" db="EMBL/GenBank/DDBJ databases">
        <title>Complete sequence of Pseudomonas putida F1.</title>
        <authorList>
            <consortium name="US DOE Joint Genome Institute"/>
            <person name="Copeland A."/>
            <person name="Lucas S."/>
            <person name="Lapidus A."/>
            <person name="Barry K."/>
            <person name="Detter J.C."/>
            <person name="Glavina del Rio T."/>
            <person name="Hammon N."/>
            <person name="Israni S."/>
            <person name="Dalin E."/>
            <person name="Tice H."/>
            <person name="Pitluck S."/>
            <person name="Chain P."/>
            <person name="Malfatti S."/>
            <person name="Shin M."/>
            <person name="Vergez L."/>
            <person name="Schmutz J."/>
            <person name="Larimer F."/>
            <person name="Land M."/>
            <person name="Hauser L."/>
            <person name="Kyrpides N."/>
            <person name="Lykidis A."/>
            <person name="Parales R."/>
            <person name="Richardson P."/>
        </authorList>
    </citation>
    <scope>NUCLEOTIDE SEQUENCE [LARGE SCALE GENOMIC DNA]</scope>
    <source>
        <strain>ATCC 700007 / DSM 6899 / JCM 31910 / BCRC 17059 / LMG 24140 / F1</strain>
    </source>
</reference>
<dbReference type="EC" id="4.2.1.17" evidence="1"/>
<dbReference type="EC" id="5.1.2.3" evidence="1"/>
<dbReference type="EC" id="5.3.3.8" evidence="1"/>
<dbReference type="EC" id="1.1.1.35" evidence="1"/>
<dbReference type="EMBL" id="CP000712">
    <property type="protein sequence ID" value="ABQ79730.1"/>
    <property type="molecule type" value="Genomic_DNA"/>
</dbReference>
<dbReference type="SMR" id="A5W6H0"/>
<dbReference type="KEGG" id="ppf:Pput_3606"/>
<dbReference type="eggNOG" id="COG1024">
    <property type="taxonomic scope" value="Bacteria"/>
</dbReference>
<dbReference type="eggNOG" id="COG1250">
    <property type="taxonomic scope" value="Bacteria"/>
</dbReference>
<dbReference type="HOGENOM" id="CLU_009834_16_3_6"/>
<dbReference type="UniPathway" id="UPA00659"/>
<dbReference type="GO" id="GO:0036125">
    <property type="term" value="C:fatty acid beta-oxidation multienzyme complex"/>
    <property type="evidence" value="ECO:0007669"/>
    <property type="project" value="InterPro"/>
</dbReference>
<dbReference type="GO" id="GO:0008692">
    <property type="term" value="F:3-hydroxybutyryl-CoA epimerase activity"/>
    <property type="evidence" value="ECO:0007669"/>
    <property type="project" value="UniProtKB-UniRule"/>
</dbReference>
<dbReference type="GO" id="GO:0004165">
    <property type="term" value="F:delta(3)-delta(2)-enoyl-CoA isomerase activity"/>
    <property type="evidence" value="ECO:0007669"/>
    <property type="project" value="UniProtKB-UniRule"/>
</dbReference>
<dbReference type="GO" id="GO:0004300">
    <property type="term" value="F:enoyl-CoA hydratase activity"/>
    <property type="evidence" value="ECO:0007669"/>
    <property type="project" value="UniProtKB-UniRule"/>
</dbReference>
<dbReference type="GO" id="GO:0016509">
    <property type="term" value="F:long-chain-3-hydroxyacyl-CoA dehydrogenase activity"/>
    <property type="evidence" value="ECO:0007669"/>
    <property type="project" value="TreeGrafter"/>
</dbReference>
<dbReference type="GO" id="GO:0070403">
    <property type="term" value="F:NAD+ binding"/>
    <property type="evidence" value="ECO:0007669"/>
    <property type="project" value="InterPro"/>
</dbReference>
<dbReference type="GO" id="GO:0006635">
    <property type="term" value="P:fatty acid beta-oxidation"/>
    <property type="evidence" value="ECO:0007669"/>
    <property type="project" value="UniProtKB-UniRule"/>
</dbReference>
<dbReference type="CDD" id="cd06558">
    <property type="entry name" value="crotonase-like"/>
    <property type="match status" value="1"/>
</dbReference>
<dbReference type="FunFam" id="1.10.1040.50:FF:000001">
    <property type="entry name" value="Fatty acid oxidation complex subunit alpha"/>
    <property type="match status" value="1"/>
</dbReference>
<dbReference type="FunFam" id="3.90.226.10:FF:000018">
    <property type="entry name" value="Fatty acid oxidation complex subunit alpha"/>
    <property type="match status" value="1"/>
</dbReference>
<dbReference type="FunFam" id="3.40.50.720:FF:000009">
    <property type="entry name" value="Fatty oxidation complex, alpha subunit"/>
    <property type="match status" value="1"/>
</dbReference>
<dbReference type="Gene3D" id="1.10.1040.50">
    <property type="match status" value="1"/>
</dbReference>
<dbReference type="Gene3D" id="3.90.226.10">
    <property type="entry name" value="2-enoyl-CoA Hydratase, Chain A, domain 1"/>
    <property type="match status" value="1"/>
</dbReference>
<dbReference type="Gene3D" id="3.40.50.720">
    <property type="entry name" value="NAD(P)-binding Rossmann-like Domain"/>
    <property type="match status" value="1"/>
</dbReference>
<dbReference type="HAMAP" id="MF_01621">
    <property type="entry name" value="FadB"/>
    <property type="match status" value="1"/>
</dbReference>
<dbReference type="InterPro" id="IPR006180">
    <property type="entry name" value="3-OHacyl-CoA_DH_CS"/>
</dbReference>
<dbReference type="InterPro" id="IPR006176">
    <property type="entry name" value="3-OHacyl-CoA_DH_NAD-bd"/>
</dbReference>
<dbReference type="InterPro" id="IPR006108">
    <property type="entry name" value="3HC_DH_C"/>
</dbReference>
<dbReference type="InterPro" id="IPR008927">
    <property type="entry name" value="6-PGluconate_DH-like_C_sf"/>
</dbReference>
<dbReference type="InterPro" id="IPR029045">
    <property type="entry name" value="ClpP/crotonase-like_dom_sf"/>
</dbReference>
<dbReference type="InterPro" id="IPR018376">
    <property type="entry name" value="Enoyl-CoA_hyd/isom_CS"/>
</dbReference>
<dbReference type="InterPro" id="IPR001753">
    <property type="entry name" value="Enoyl-CoA_hydra/iso"/>
</dbReference>
<dbReference type="InterPro" id="IPR050136">
    <property type="entry name" value="FA_oxidation_alpha_subunit"/>
</dbReference>
<dbReference type="InterPro" id="IPR012799">
    <property type="entry name" value="FadB"/>
</dbReference>
<dbReference type="InterPro" id="IPR036291">
    <property type="entry name" value="NAD(P)-bd_dom_sf"/>
</dbReference>
<dbReference type="NCBIfam" id="TIGR02437">
    <property type="entry name" value="FadB"/>
    <property type="match status" value="1"/>
</dbReference>
<dbReference type="NCBIfam" id="NF008727">
    <property type="entry name" value="PRK11730.1"/>
    <property type="match status" value="1"/>
</dbReference>
<dbReference type="PANTHER" id="PTHR43612">
    <property type="entry name" value="TRIFUNCTIONAL ENZYME SUBUNIT ALPHA"/>
    <property type="match status" value="1"/>
</dbReference>
<dbReference type="PANTHER" id="PTHR43612:SF3">
    <property type="entry name" value="TRIFUNCTIONAL ENZYME SUBUNIT ALPHA, MITOCHONDRIAL"/>
    <property type="match status" value="1"/>
</dbReference>
<dbReference type="Pfam" id="PF00725">
    <property type="entry name" value="3HCDH"/>
    <property type="match status" value="1"/>
</dbReference>
<dbReference type="Pfam" id="PF02737">
    <property type="entry name" value="3HCDH_N"/>
    <property type="match status" value="1"/>
</dbReference>
<dbReference type="Pfam" id="PF00378">
    <property type="entry name" value="ECH_1"/>
    <property type="match status" value="1"/>
</dbReference>
<dbReference type="SUPFAM" id="SSF48179">
    <property type="entry name" value="6-phosphogluconate dehydrogenase C-terminal domain-like"/>
    <property type="match status" value="2"/>
</dbReference>
<dbReference type="SUPFAM" id="SSF52096">
    <property type="entry name" value="ClpP/crotonase"/>
    <property type="match status" value="1"/>
</dbReference>
<dbReference type="SUPFAM" id="SSF51735">
    <property type="entry name" value="NAD(P)-binding Rossmann-fold domains"/>
    <property type="match status" value="1"/>
</dbReference>
<dbReference type="PROSITE" id="PS00067">
    <property type="entry name" value="3HCDH"/>
    <property type="match status" value="1"/>
</dbReference>
<dbReference type="PROSITE" id="PS00166">
    <property type="entry name" value="ENOYL_COA_HYDRATASE"/>
    <property type="match status" value="1"/>
</dbReference>
<feature type="chain" id="PRO_1000069569" description="Fatty acid oxidation complex subunit alpha">
    <location>
        <begin position="1"/>
        <end position="715"/>
    </location>
</feature>
<feature type="region of interest" description="Enoyl-CoA hydratase/isomerase" evidence="1">
    <location>
        <begin position="1"/>
        <end position="190"/>
    </location>
</feature>
<feature type="region of interest" description="3-hydroxyacyl-CoA dehydrogenase" evidence="1">
    <location>
        <begin position="312"/>
        <end position="715"/>
    </location>
</feature>
<feature type="active site" description="For 3-hydroxyacyl-CoA dehydrogenase activity" evidence="1">
    <location>
        <position position="451"/>
    </location>
</feature>
<feature type="binding site" evidence="1">
    <location>
        <position position="297"/>
    </location>
    <ligand>
        <name>substrate</name>
    </ligand>
</feature>
<feature type="binding site" evidence="1">
    <location>
        <position position="325"/>
    </location>
    <ligand>
        <name>NAD(+)</name>
        <dbReference type="ChEBI" id="CHEBI:57540"/>
    </ligand>
</feature>
<feature type="binding site" evidence="1">
    <location>
        <position position="344"/>
    </location>
    <ligand>
        <name>NAD(+)</name>
        <dbReference type="ChEBI" id="CHEBI:57540"/>
    </ligand>
</feature>
<feature type="binding site" evidence="1">
    <location>
        <begin position="401"/>
        <end position="403"/>
    </location>
    <ligand>
        <name>NAD(+)</name>
        <dbReference type="ChEBI" id="CHEBI:57540"/>
    </ligand>
</feature>
<feature type="binding site" evidence="1">
    <location>
        <position position="408"/>
    </location>
    <ligand>
        <name>NAD(+)</name>
        <dbReference type="ChEBI" id="CHEBI:57540"/>
    </ligand>
</feature>
<feature type="binding site" evidence="1">
    <location>
        <position position="430"/>
    </location>
    <ligand>
        <name>NAD(+)</name>
        <dbReference type="ChEBI" id="CHEBI:57540"/>
    </ligand>
</feature>
<feature type="binding site" evidence="1">
    <location>
        <position position="454"/>
    </location>
    <ligand>
        <name>NAD(+)</name>
        <dbReference type="ChEBI" id="CHEBI:57540"/>
    </ligand>
</feature>
<feature type="binding site" evidence="1">
    <location>
        <position position="501"/>
    </location>
    <ligand>
        <name>substrate</name>
    </ligand>
</feature>
<feature type="binding site" evidence="1">
    <location>
        <position position="660"/>
    </location>
    <ligand>
        <name>substrate</name>
    </ligand>
</feature>
<feature type="site" description="Important for catalytic activity" evidence="1">
    <location>
        <position position="120"/>
    </location>
</feature>
<feature type="site" description="Important for catalytic activity" evidence="1">
    <location>
        <position position="140"/>
    </location>
</feature>
<evidence type="ECO:0000255" key="1">
    <source>
        <dbReference type="HAMAP-Rule" id="MF_01621"/>
    </source>
</evidence>
<gene>
    <name evidence="1" type="primary">fadB</name>
    <name type="ordered locus">Pput_3606</name>
</gene>
<organism>
    <name type="scientific">Pseudomonas putida (strain ATCC 700007 / DSM 6899 / JCM 31910 / BCRC 17059 / LMG 24140 / F1)</name>
    <dbReference type="NCBI Taxonomy" id="351746"/>
    <lineage>
        <taxon>Bacteria</taxon>
        <taxon>Pseudomonadati</taxon>
        <taxon>Pseudomonadota</taxon>
        <taxon>Gammaproteobacteria</taxon>
        <taxon>Pseudomonadales</taxon>
        <taxon>Pseudomonadaceae</taxon>
        <taxon>Pseudomonas</taxon>
    </lineage>
</organism>
<protein>
    <recommendedName>
        <fullName evidence="1">Fatty acid oxidation complex subunit alpha</fullName>
    </recommendedName>
    <domain>
        <recommendedName>
            <fullName evidence="1">Enoyl-CoA hydratase/Delta(3)-cis-Delta(2)-trans-enoyl-CoA isomerase/3-hydroxybutyryl-CoA epimerase</fullName>
            <ecNumber evidence="1">4.2.1.17</ecNumber>
            <ecNumber evidence="1">5.1.2.3</ecNumber>
            <ecNumber evidence="1">5.3.3.8</ecNumber>
        </recommendedName>
    </domain>
    <domain>
        <recommendedName>
            <fullName evidence="1">3-hydroxyacyl-CoA dehydrogenase</fullName>
            <ecNumber evidence="1">1.1.1.35</ecNumber>
        </recommendedName>
    </domain>
</protein>
<keyword id="KW-0276">Fatty acid metabolism</keyword>
<keyword id="KW-0413">Isomerase</keyword>
<keyword id="KW-0442">Lipid degradation</keyword>
<keyword id="KW-0443">Lipid metabolism</keyword>
<keyword id="KW-0456">Lyase</keyword>
<keyword id="KW-0511">Multifunctional enzyme</keyword>
<keyword id="KW-0520">NAD</keyword>
<keyword id="KW-0560">Oxidoreductase</keyword>
<name>FADB_PSEP1</name>